<comment type="function">
    <text evidence="1">Hydrolyzes ribosome-free peptidyl-tRNAs (with 1 or more amino acids incorporated), which drop off the ribosome during protein synthesis, or as a result of ribosome stalling.</text>
</comment>
<comment type="function">
    <text evidence="1">Catalyzes the release of premature peptidyl moieties from peptidyl-tRNA molecules trapped in stalled 50S ribosomal subunits, and thus maintains levels of free tRNAs and 50S ribosomes.</text>
</comment>
<comment type="catalytic activity">
    <reaction evidence="1">
        <text>an N-acyl-L-alpha-aminoacyl-tRNA + H2O = an N-acyl-L-amino acid + a tRNA + H(+)</text>
        <dbReference type="Rhea" id="RHEA:54448"/>
        <dbReference type="Rhea" id="RHEA-COMP:10123"/>
        <dbReference type="Rhea" id="RHEA-COMP:13883"/>
        <dbReference type="ChEBI" id="CHEBI:15377"/>
        <dbReference type="ChEBI" id="CHEBI:15378"/>
        <dbReference type="ChEBI" id="CHEBI:59874"/>
        <dbReference type="ChEBI" id="CHEBI:78442"/>
        <dbReference type="ChEBI" id="CHEBI:138191"/>
        <dbReference type="EC" id="3.1.1.29"/>
    </reaction>
</comment>
<comment type="subunit">
    <text evidence="1">Monomer.</text>
</comment>
<comment type="subcellular location">
    <subcellularLocation>
        <location evidence="1">Cytoplasm</location>
    </subcellularLocation>
</comment>
<comment type="similarity">
    <text evidence="1">Belongs to the PTH family.</text>
</comment>
<keyword id="KW-0963">Cytoplasm</keyword>
<keyword id="KW-0378">Hydrolase</keyword>
<keyword id="KW-0694">RNA-binding</keyword>
<keyword id="KW-0820">tRNA-binding</keyword>
<proteinExistence type="inferred from homology"/>
<feature type="chain" id="PRO_1000118384" description="Peptidyl-tRNA hydrolase">
    <location>
        <begin position="1"/>
        <end position="189"/>
    </location>
</feature>
<feature type="active site" description="Proton acceptor" evidence="1">
    <location>
        <position position="19"/>
    </location>
</feature>
<feature type="binding site" evidence="1">
    <location>
        <position position="14"/>
    </location>
    <ligand>
        <name>tRNA</name>
        <dbReference type="ChEBI" id="CHEBI:17843"/>
    </ligand>
</feature>
<feature type="binding site" evidence="1">
    <location>
        <position position="64"/>
    </location>
    <ligand>
        <name>tRNA</name>
        <dbReference type="ChEBI" id="CHEBI:17843"/>
    </ligand>
</feature>
<feature type="binding site" evidence="1">
    <location>
        <position position="66"/>
    </location>
    <ligand>
        <name>tRNA</name>
        <dbReference type="ChEBI" id="CHEBI:17843"/>
    </ligand>
</feature>
<feature type="binding site" evidence="1">
    <location>
        <position position="112"/>
    </location>
    <ligand>
        <name>tRNA</name>
        <dbReference type="ChEBI" id="CHEBI:17843"/>
    </ligand>
</feature>
<feature type="site" description="Discriminates between blocked and unblocked aminoacyl-tRNA" evidence="1">
    <location>
        <position position="9"/>
    </location>
</feature>
<feature type="site" description="Stabilizes the basic form of H active site to accept a proton" evidence="1">
    <location>
        <position position="91"/>
    </location>
</feature>
<reference key="1">
    <citation type="submission" date="2008-10" db="EMBL/GenBank/DDBJ databases">
        <title>Genome sequence of Clostridium botulinum A2 Kyoto.</title>
        <authorList>
            <person name="Shrivastava S."/>
            <person name="Brinkac L.M."/>
            <person name="Brown J.L."/>
            <person name="Bruce D."/>
            <person name="Detter C.C."/>
            <person name="Johnson E.A."/>
            <person name="Munk C.A."/>
            <person name="Smith L.A."/>
            <person name="Smith T.J."/>
            <person name="Sutton G."/>
            <person name="Brettin T.S."/>
        </authorList>
    </citation>
    <scope>NUCLEOTIDE SEQUENCE [LARGE SCALE GENOMIC DNA]</scope>
    <source>
        <strain>Kyoto / Type A2</strain>
    </source>
</reference>
<sequence>MYLVVGLGNIGKEYKKTRHNIGFDVVDIIAEKYNIEINRQKFKGSYGEGRIGNEKIILLKPSTYMNLSGESVIEAANFYKIDKENIIVIYDDMSIDIGKLRVRGKGSAGGHNGIKNIIQHLNSDIFPRVRVGIGQPDENVVNYVLGKFSKDEREIIEKVLAMSAKACISIVEDGVTEAMNKYNGVKIEV</sequence>
<protein>
    <recommendedName>
        <fullName evidence="1">Peptidyl-tRNA hydrolase</fullName>
        <shortName evidence="1">Pth</shortName>
        <ecNumber evidence="1">3.1.1.29</ecNumber>
    </recommendedName>
</protein>
<organism>
    <name type="scientific">Clostridium botulinum (strain Kyoto / Type A2)</name>
    <dbReference type="NCBI Taxonomy" id="536232"/>
    <lineage>
        <taxon>Bacteria</taxon>
        <taxon>Bacillati</taxon>
        <taxon>Bacillota</taxon>
        <taxon>Clostridia</taxon>
        <taxon>Eubacteriales</taxon>
        <taxon>Clostridiaceae</taxon>
        <taxon>Clostridium</taxon>
    </lineage>
</organism>
<gene>
    <name evidence="1" type="primary">pth</name>
    <name type="ordered locus">CLM_4032</name>
</gene>
<name>PTH_CLOBJ</name>
<evidence type="ECO:0000255" key="1">
    <source>
        <dbReference type="HAMAP-Rule" id="MF_00083"/>
    </source>
</evidence>
<accession>C1FNE6</accession>
<dbReference type="EC" id="3.1.1.29" evidence="1"/>
<dbReference type="EMBL" id="CP001581">
    <property type="protein sequence ID" value="ACO85034.1"/>
    <property type="molecule type" value="Genomic_DNA"/>
</dbReference>
<dbReference type="RefSeq" id="WP_003359450.1">
    <property type="nucleotide sequence ID" value="NC_012563.1"/>
</dbReference>
<dbReference type="SMR" id="C1FNE6"/>
<dbReference type="KEGG" id="cby:CLM_4032"/>
<dbReference type="eggNOG" id="COG0193">
    <property type="taxonomic scope" value="Bacteria"/>
</dbReference>
<dbReference type="HOGENOM" id="CLU_062456_4_1_9"/>
<dbReference type="Proteomes" id="UP000001374">
    <property type="component" value="Chromosome"/>
</dbReference>
<dbReference type="GO" id="GO:0005737">
    <property type="term" value="C:cytoplasm"/>
    <property type="evidence" value="ECO:0007669"/>
    <property type="project" value="UniProtKB-SubCell"/>
</dbReference>
<dbReference type="GO" id="GO:0004045">
    <property type="term" value="F:peptidyl-tRNA hydrolase activity"/>
    <property type="evidence" value="ECO:0007669"/>
    <property type="project" value="UniProtKB-UniRule"/>
</dbReference>
<dbReference type="GO" id="GO:0000049">
    <property type="term" value="F:tRNA binding"/>
    <property type="evidence" value="ECO:0007669"/>
    <property type="project" value="UniProtKB-UniRule"/>
</dbReference>
<dbReference type="GO" id="GO:0006515">
    <property type="term" value="P:protein quality control for misfolded or incompletely synthesized proteins"/>
    <property type="evidence" value="ECO:0007669"/>
    <property type="project" value="UniProtKB-UniRule"/>
</dbReference>
<dbReference type="GO" id="GO:0072344">
    <property type="term" value="P:rescue of stalled ribosome"/>
    <property type="evidence" value="ECO:0007669"/>
    <property type="project" value="UniProtKB-UniRule"/>
</dbReference>
<dbReference type="CDD" id="cd00462">
    <property type="entry name" value="PTH"/>
    <property type="match status" value="1"/>
</dbReference>
<dbReference type="FunFam" id="3.40.50.1470:FF:000001">
    <property type="entry name" value="Peptidyl-tRNA hydrolase"/>
    <property type="match status" value="1"/>
</dbReference>
<dbReference type="Gene3D" id="3.40.50.1470">
    <property type="entry name" value="Peptidyl-tRNA hydrolase"/>
    <property type="match status" value="1"/>
</dbReference>
<dbReference type="HAMAP" id="MF_00083">
    <property type="entry name" value="Pept_tRNA_hydro_bact"/>
    <property type="match status" value="1"/>
</dbReference>
<dbReference type="InterPro" id="IPR001328">
    <property type="entry name" value="Pept_tRNA_hydro"/>
</dbReference>
<dbReference type="InterPro" id="IPR018171">
    <property type="entry name" value="Pept_tRNA_hydro_CS"/>
</dbReference>
<dbReference type="InterPro" id="IPR036416">
    <property type="entry name" value="Pept_tRNA_hydro_sf"/>
</dbReference>
<dbReference type="NCBIfam" id="TIGR00447">
    <property type="entry name" value="pth"/>
    <property type="match status" value="1"/>
</dbReference>
<dbReference type="PANTHER" id="PTHR17224">
    <property type="entry name" value="PEPTIDYL-TRNA HYDROLASE"/>
    <property type="match status" value="1"/>
</dbReference>
<dbReference type="PANTHER" id="PTHR17224:SF1">
    <property type="entry name" value="PEPTIDYL-TRNA HYDROLASE"/>
    <property type="match status" value="1"/>
</dbReference>
<dbReference type="Pfam" id="PF01195">
    <property type="entry name" value="Pept_tRNA_hydro"/>
    <property type="match status" value="1"/>
</dbReference>
<dbReference type="SUPFAM" id="SSF53178">
    <property type="entry name" value="Peptidyl-tRNA hydrolase-like"/>
    <property type="match status" value="1"/>
</dbReference>
<dbReference type="PROSITE" id="PS01195">
    <property type="entry name" value="PEPT_TRNA_HYDROL_1"/>
    <property type="match status" value="1"/>
</dbReference>
<dbReference type="PROSITE" id="PS01196">
    <property type="entry name" value="PEPT_TRNA_HYDROL_2"/>
    <property type="match status" value="1"/>
</dbReference>